<accession>Q0TJA5</accession>
<gene>
    <name evidence="1" type="primary">matP</name>
    <name type="ordered locus">ECP_0961</name>
</gene>
<keyword id="KW-0131">Cell cycle</keyword>
<keyword id="KW-0132">Cell division</keyword>
<keyword id="KW-0963">Cytoplasm</keyword>
<keyword id="KW-0238">DNA-binding</keyword>
<feature type="chain" id="PRO_1000064626" description="Macrodomain Ter protein">
    <location>
        <begin position="1"/>
        <end position="150"/>
    </location>
</feature>
<reference key="1">
    <citation type="journal article" date="2006" name="Mol. Microbiol.">
        <title>Role of pathogenicity island-associated integrases in the genome plasticity of uropathogenic Escherichia coli strain 536.</title>
        <authorList>
            <person name="Hochhut B."/>
            <person name="Wilde C."/>
            <person name="Balling G."/>
            <person name="Middendorf B."/>
            <person name="Dobrindt U."/>
            <person name="Brzuszkiewicz E."/>
            <person name="Gottschalk G."/>
            <person name="Carniel E."/>
            <person name="Hacker J."/>
        </authorList>
    </citation>
    <scope>NUCLEOTIDE SEQUENCE [LARGE SCALE GENOMIC DNA]</scope>
    <source>
        <strain>536 / UPEC</strain>
    </source>
</reference>
<name>MATP_ECOL5</name>
<dbReference type="EMBL" id="CP000247">
    <property type="protein sequence ID" value="ABG68974.1"/>
    <property type="molecule type" value="Genomic_DNA"/>
</dbReference>
<dbReference type="RefSeq" id="WP_000877152.1">
    <property type="nucleotide sequence ID" value="NC_008253.1"/>
</dbReference>
<dbReference type="SMR" id="Q0TJA5"/>
<dbReference type="KEGG" id="ecp:ECP_0961"/>
<dbReference type="HOGENOM" id="CLU_142157_0_0_6"/>
<dbReference type="Proteomes" id="UP000009182">
    <property type="component" value="Chromosome"/>
</dbReference>
<dbReference type="GO" id="GO:0005737">
    <property type="term" value="C:cytoplasm"/>
    <property type="evidence" value="ECO:0007669"/>
    <property type="project" value="UniProtKB-SubCell"/>
</dbReference>
<dbReference type="GO" id="GO:0043565">
    <property type="term" value="F:sequence-specific DNA binding"/>
    <property type="evidence" value="ECO:0007669"/>
    <property type="project" value="UniProtKB-UniRule"/>
</dbReference>
<dbReference type="GO" id="GO:0051301">
    <property type="term" value="P:cell division"/>
    <property type="evidence" value="ECO:0007669"/>
    <property type="project" value="UniProtKB-UniRule"/>
</dbReference>
<dbReference type="GO" id="GO:0006355">
    <property type="term" value="P:regulation of DNA-templated transcription"/>
    <property type="evidence" value="ECO:0007669"/>
    <property type="project" value="InterPro"/>
</dbReference>
<dbReference type="FunFam" id="1.10.1220.10:FF:000004">
    <property type="entry name" value="Macrodomain Ter protein"/>
    <property type="match status" value="1"/>
</dbReference>
<dbReference type="FunFam" id="1.20.1270.380:FF:000001">
    <property type="entry name" value="Macrodomain Ter protein"/>
    <property type="match status" value="1"/>
</dbReference>
<dbReference type="Gene3D" id="1.20.1270.380">
    <property type="entry name" value="MatP, N-terminal domain"/>
    <property type="match status" value="1"/>
</dbReference>
<dbReference type="Gene3D" id="1.10.1220.10">
    <property type="entry name" value="Met repressor-like"/>
    <property type="match status" value="1"/>
</dbReference>
<dbReference type="HAMAP" id="MF_01073">
    <property type="entry name" value="MatP"/>
    <property type="match status" value="1"/>
</dbReference>
<dbReference type="InterPro" id="IPR013321">
    <property type="entry name" value="Arc_rbn_hlx_hlx"/>
</dbReference>
<dbReference type="InterPro" id="IPR009390">
    <property type="entry name" value="MatP"/>
</dbReference>
<dbReference type="InterPro" id="IPR035375">
    <property type="entry name" value="MatP_C"/>
</dbReference>
<dbReference type="InterPro" id="IPR035087">
    <property type="entry name" value="MatP_N"/>
</dbReference>
<dbReference type="InterPro" id="IPR038339">
    <property type="entry name" value="MatP_N_sf"/>
</dbReference>
<dbReference type="NCBIfam" id="NF003471">
    <property type="entry name" value="PRK05097.1"/>
    <property type="match status" value="1"/>
</dbReference>
<dbReference type="Pfam" id="PF06303">
    <property type="entry name" value="MatP"/>
    <property type="match status" value="1"/>
</dbReference>
<dbReference type="Pfam" id="PF17414">
    <property type="entry name" value="MatP_C"/>
    <property type="match status" value="1"/>
</dbReference>
<protein>
    <recommendedName>
        <fullName evidence="1">Macrodomain Ter protein</fullName>
    </recommendedName>
</protein>
<sequence length="150" mass="17732">MKYQQLENLESGWKWKYLVKKHREGELITRYIEASAAQEAVDELLSLENEPVLVNGWIDKHMNPELVNRMKQTIRARRKRHFNAEHQHTRKKSIDLEFIVWHRLAGLAQRRGKTLSETIVQLIEDAENKEKYANKMSSLKQDLQALLGKE</sequence>
<comment type="function">
    <text evidence="1">Required for spatial organization of the terminus region of the chromosome (Ter macrodomain) during the cell cycle. Prevents early segregation of duplicated Ter macrodomains during cell division. Binds specifically to matS, which is a 13 bp signature motif repeated within the Ter macrodomain.</text>
</comment>
<comment type="subunit">
    <text evidence="1">Homodimer.</text>
</comment>
<comment type="subcellular location">
    <subcellularLocation>
        <location evidence="1">Cytoplasm</location>
    </subcellularLocation>
</comment>
<comment type="similarity">
    <text evidence="1">Belongs to the MatP family.</text>
</comment>
<organism>
    <name type="scientific">Escherichia coli O6:K15:H31 (strain 536 / UPEC)</name>
    <dbReference type="NCBI Taxonomy" id="362663"/>
    <lineage>
        <taxon>Bacteria</taxon>
        <taxon>Pseudomonadati</taxon>
        <taxon>Pseudomonadota</taxon>
        <taxon>Gammaproteobacteria</taxon>
        <taxon>Enterobacterales</taxon>
        <taxon>Enterobacteriaceae</taxon>
        <taxon>Escherichia</taxon>
    </lineage>
</organism>
<proteinExistence type="inferred from homology"/>
<evidence type="ECO:0000255" key="1">
    <source>
        <dbReference type="HAMAP-Rule" id="MF_01073"/>
    </source>
</evidence>